<evidence type="ECO:0000255" key="1">
    <source>
        <dbReference type="HAMAP-Rule" id="MF_00632"/>
    </source>
</evidence>
<protein>
    <recommendedName>
        <fullName evidence="1">Nucleotide-binding protein HS_0688</fullName>
    </recommendedName>
</protein>
<gene>
    <name type="ordered locus">HS_0688</name>
</gene>
<comment type="function">
    <text evidence="1">Nucleotide-binding protein.</text>
</comment>
<comment type="similarity">
    <text evidence="1">Belongs to the YajQ family.</text>
</comment>
<sequence length="163" mass="18567">MPSFDIVSEITLYEIRNAVENANRVLSTRYDFRGVEATIELNEKAETIKVTTESDFQLEQLIEILISACVKRDIQHNSLDIPADSEHSGKLYSKEIKLKQGIETDMAKKIIKLIKDAKLKVQTQIQGEQVRVSGKSRDDLQATIQLVKNAELGQPFQFNNFRD</sequence>
<accession>Q0I2U5</accession>
<reference key="1">
    <citation type="journal article" date="2007" name="J. Bacteriol.">
        <title>Complete genome sequence of Haemophilus somnus (Histophilus somni) strain 129Pt and comparison to Haemophilus ducreyi 35000HP and Haemophilus influenzae Rd.</title>
        <authorList>
            <person name="Challacombe J.F."/>
            <person name="Duncan A.J."/>
            <person name="Brettin T.S."/>
            <person name="Bruce D."/>
            <person name="Chertkov O."/>
            <person name="Detter J.C."/>
            <person name="Han C.S."/>
            <person name="Misra M."/>
            <person name="Richardson P."/>
            <person name="Tapia R."/>
            <person name="Thayer N."/>
            <person name="Xie G."/>
            <person name="Inzana T.J."/>
        </authorList>
    </citation>
    <scope>NUCLEOTIDE SEQUENCE [LARGE SCALE GENOMIC DNA]</scope>
    <source>
        <strain>129Pt</strain>
    </source>
</reference>
<feature type="chain" id="PRO_0000261942" description="Nucleotide-binding protein HS_0688">
    <location>
        <begin position="1"/>
        <end position="163"/>
    </location>
</feature>
<organism>
    <name type="scientific">Histophilus somni (strain 129Pt)</name>
    <name type="common">Haemophilus somnus</name>
    <dbReference type="NCBI Taxonomy" id="205914"/>
    <lineage>
        <taxon>Bacteria</taxon>
        <taxon>Pseudomonadati</taxon>
        <taxon>Pseudomonadota</taxon>
        <taxon>Gammaproteobacteria</taxon>
        <taxon>Pasteurellales</taxon>
        <taxon>Pasteurellaceae</taxon>
        <taxon>Histophilus</taxon>
    </lineage>
</organism>
<keyword id="KW-0547">Nucleotide-binding</keyword>
<name>Y688_HISS1</name>
<dbReference type="EMBL" id="CP000436">
    <property type="protein sequence ID" value="ABI24965.1"/>
    <property type="molecule type" value="Genomic_DNA"/>
</dbReference>
<dbReference type="SMR" id="Q0I2U5"/>
<dbReference type="KEGG" id="hso:HS_0688"/>
<dbReference type="eggNOG" id="COG1666">
    <property type="taxonomic scope" value="Bacteria"/>
</dbReference>
<dbReference type="HOGENOM" id="CLU_099839_1_0_6"/>
<dbReference type="GO" id="GO:0005829">
    <property type="term" value="C:cytosol"/>
    <property type="evidence" value="ECO:0007669"/>
    <property type="project" value="TreeGrafter"/>
</dbReference>
<dbReference type="GO" id="GO:0000166">
    <property type="term" value="F:nucleotide binding"/>
    <property type="evidence" value="ECO:0007669"/>
    <property type="project" value="TreeGrafter"/>
</dbReference>
<dbReference type="CDD" id="cd11740">
    <property type="entry name" value="YajQ_like"/>
    <property type="match status" value="1"/>
</dbReference>
<dbReference type="FunFam" id="3.30.70.860:FF:000001">
    <property type="entry name" value="UPF0234 protein YajQ"/>
    <property type="match status" value="1"/>
</dbReference>
<dbReference type="FunFam" id="3.30.70.990:FF:000001">
    <property type="entry name" value="UPF0234 protein YajQ"/>
    <property type="match status" value="1"/>
</dbReference>
<dbReference type="Gene3D" id="3.30.70.860">
    <property type="match status" value="1"/>
</dbReference>
<dbReference type="Gene3D" id="3.30.70.990">
    <property type="entry name" value="YajQ-like, domain 2"/>
    <property type="match status" value="1"/>
</dbReference>
<dbReference type="HAMAP" id="MF_00632">
    <property type="entry name" value="YajQ"/>
    <property type="match status" value="1"/>
</dbReference>
<dbReference type="InterPro" id="IPR007551">
    <property type="entry name" value="DUF520"/>
</dbReference>
<dbReference type="InterPro" id="IPR035571">
    <property type="entry name" value="UPF0234-like_C"/>
</dbReference>
<dbReference type="InterPro" id="IPR035570">
    <property type="entry name" value="UPF0234_N"/>
</dbReference>
<dbReference type="InterPro" id="IPR036183">
    <property type="entry name" value="YajQ-like_sf"/>
</dbReference>
<dbReference type="NCBIfam" id="NF003819">
    <property type="entry name" value="PRK05412.1"/>
    <property type="match status" value="1"/>
</dbReference>
<dbReference type="PANTHER" id="PTHR30476">
    <property type="entry name" value="UPF0234 PROTEIN YAJQ"/>
    <property type="match status" value="1"/>
</dbReference>
<dbReference type="PANTHER" id="PTHR30476:SF0">
    <property type="entry name" value="UPF0234 PROTEIN YAJQ"/>
    <property type="match status" value="1"/>
</dbReference>
<dbReference type="Pfam" id="PF04461">
    <property type="entry name" value="DUF520"/>
    <property type="match status" value="1"/>
</dbReference>
<dbReference type="SUPFAM" id="SSF89963">
    <property type="entry name" value="YajQ-like"/>
    <property type="match status" value="2"/>
</dbReference>
<proteinExistence type="inferred from homology"/>